<reference key="1">
    <citation type="journal article" date="2005" name="Proc. Natl. Acad. Sci. U.S.A.">
        <title>Comparison of the complete genome sequences of Pseudomonas syringae pv. syringae B728a and pv. tomato DC3000.</title>
        <authorList>
            <person name="Feil H."/>
            <person name="Feil W.S."/>
            <person name="Chain P."/>
            <person name="Larimer F."/>
            <person name="Dibartolo G."/>
            <person name="Copeland A."/>
            <person name="Lykidis A."/>
            <person name="Trong S."/>
            <person name="Nolan M."/>
            <person name="Goltsman E."/>
            <person name="Thiel J."/>
            <person name="Malfatti S."/>
            <person name="Loper J.E."/>
            <person name="Lapidus A."/>
            <person name="Detter J.C."/>
            <person name="Land M."/>
            <person name="Richardson P.M."/>
            <person name="Kyrpides N.C."/>
            <person name="Ivanova N."/>
            <person name="Lindow S.E."/>
        </authorList>
    </citation>
    <scope>NUCLEOTIDE SEQUENCE [LARGE SCALE GENOMIC DNA]</scope>
    <source>
        <strain>B728a</strain>
    </source>
</reference>
<gene>
    <name evidence="1" type="primary">hisH</name>
    <name type="ordered locus">Psyr_4896</name>
</gene>
<proteinExistence type="inferred from homology"/>
<keyword id="KW-0028">Amino-acid biosynthesis</keyword>
<keyword id="KW-0963">Cytoplasm</keyword>
<keyword id="KW-0315">Glutamine amidotransferase</keyword>
<keyword id="KW-0368">Histidine biosynthesis</keyword>
<keyword id="KW-0378">Hydrolase</keyword>
<keyword id="KW-0456">Lyase</keyword>
<dbReference type="EC" id="4.3.2.10" evidence="1"/>
<dbReference type="EC" id="3.5.1.2" evidence="1"/>
<dbReference type="EMBL" id="CP000075">
    <property type="protein sequence ID" value="AAY39923.1"/>
    <property type="molecule type" value="Genomic_DNA"/>
</dbReference>
<dbReference type="RefSeq" id="WP_003318304.1">
    <property type="nucleotide sequence ID" value="NC_007005.1"/>
</dbReference>
<dbReference type="RefSeq" id="YP_237961.1">
    <property type="nucleotide sequence ID" value="NC_007005.1"/>
</dbReference>
<dbReference type="SMR" id="Q4ZLP9"/>
<dbReference type="STRING" id="205918.Psyr_4896"/>
<dbReference type="GeneID" id="77280743"/>
<dbReference type="KEGG" id="psb:Psyr_4896"/>
<dbReference type="PATRIC" id="fig|205918.7.peg.5061"/>
<dbReference type="eggNOG" id="COG0118">
    <property type="taxonomic scope" value="Bacteria"/>
</dbReference>
<dbReference type="HOGENOM" id="CLU_071837_2_0_6"/>
<dbReference type="OrthoDB" id="9807137at2"/>
<dbReference type="UniPathway" id="UPA00031">
    <property type="reaction ID" value="UER00010"/>
</dbReference>
<dbReference type="Proteomes" id="UP000000426">
    <property type="component" value="Chromosome"/>
</dbReference>
<dbReference type="GO" id="GO:0005737">
    <property type="term" value="C:cytoplasm"/>
    <property type="evidence" value="ECO:0007669"/>
    <property type="project" value="UniProtKB-SubCell"/>
</dbReference>
<dbReference type="GO" id="GO:0004359">
    <property type="term" value="F:glutaminase activity"/>
    <property type="evidence" value="ECO:0007669"/>
    <property type="project" value="UniProtKB-EC"/>
</dbReference>
<dbReference type="GO" id="GO:0000107">
    <property type="term" value="F:imidazoleglycerol-phosphate synthase activity"/>
    <property type="evidence" value="ECO:0007669"/>
    <property type="project" value="UniProtKB-UniRule"/>
</dbReference>
<dbReference type="GO" id="GO:0016829">
    <property type="term" value="F:lyase activity"/>
    <property type="evidence" value="ECO:0007669"/>
    <property type="project" value="UniProtKB-KW"/>
</dbReference>
<dbReference type="GO" id="GO:0000105">
    <property type="term" value="P:L-histidine biosynthetic process"/>
    <property type="evidence" value="ECO:0007669"/>
    <property type="project" value="UniProtKB-UniRule"/>
</dbReference>
<dbReference type="CDD" id="cd01748">
    <property type="entry name" value="GATase1_IGP_Synthase"/>
    <property type="match status" value="1"/>
</dbReference>
<dbReference type="FunFam" id="3.40.50.880:FF:000023">
    <property type="entry name" value="Imidazole glycerol phosphate synthase subunit HisH"/>
    <property type="match status" value="1"/>
</dbReference>
<dbReference type="Gene3D" id="3.40.50.880">
    <property type="match status" value="1"/>
</dbReference>
<dbReference type="HAMAP" id="MF_00278">
    <property type="entry name" value="HisH"/>
    <property type="match status" value="1"/>
</dbReference>
<dbReference type="InterPro" id="IPR029062">
    <property type="entry name" value="Class_I_gatase-like"/>
</dbReference>
<dbReference type="InterPro" id="IPR017926">
    <property type="entry name" value="GATASE"/>
</dbReference>
<dbReference type="InterPro" id="IPR010139">
    <property type="entry name" value="Imidazole-glycPsynth_HisH"/>
</dbReference>
<dbReference type="NCBIfam" id="TIGR01855">
    <property type="entry name" value="IMP_synth_hisH"/>
    <property type="match status" value="1"/>
</dbReference>
<dbReference type="PANTHER" id="PTHR42701">
    <property type="entry name" value="IMIDAZOLE GLYCEROL PHOSPHATE SYNTHASE SUBUNIT HISH"/>
    <property type="match status" value="1"/>
</dbReference>
<dbReference type="PANTHER" id="PTHR42701:SF2">
    <property type="entry name" value="IMIDAZOLE GLYCEROL PHOSPHATE SYNTHASE SUBUNIT HISH 1"/>
    <property type="match status" value="1"/>
</dbReference>
<dbReference type="Pfam" id="PF00117">
    <property type="entry name" value="GATase"/>
    <property type="match status" value="1"/>
</dbReference>
<dbReference type="PIRSF" id="PIRSF000495">
    <property type="entry name" value="Amidotransf_hisH"/>
    <property type="match status" value="1"/>
</dbReference>
<dbReference type="SUPFAM" id="SSF52317">
    <property type="entry name" value="Class I glutamine amidotransferase-like"/>
    <property type="match status" value="1"/>
</dbReference>
<dbReference type="PROSITE" id="PS51273">
    <property type="entry name" value="GATASE_TYPE_1"/>
    <property type="match status" value="1"/>
</dbReference>
<sequence>MQTVAVIDYGMGNLHSVAKALEHVGAGRVLITSDAKVIREADRIVFPGVGAIRDCMAEIRRLGFDSLVQEVSQDRPFLGICVGMQALLDSSEENGGVDCIGMFPGQVKFFGKDLHEEGEHLKVPHMGWNQVAQAVDHPLWHDIPDQARFYFVHSFYIDAANQRQVVGRGHYGLDFAAALADGSRFAVQFHPEKSHTHGLQLLQNFAAWDGRW</sequence>
<organism>
    <name type="scientific">Pseudomonas syringae pv. syringae (strain B728a)</name>
    <dbReference type="NCBI Taxonomy" id="205918"/>
    <lineage>
        <taxon>Bacteria</taxon>
        <taxon>Pseudomonadati</taxon>
        <taxon>Pseudomonadota</taxon>
        <taxon>Gammaproteobacteria</taxon>
        <taxon>Pseudomonadales</taxon>
        <taxon>Pseudomonadaceae</taxon>
        <taxon>Pseudomonas</taxon>
        <taxon>Pseudomonas syringae</taxon>
    </lineage>
</organism>
<accession>Q4ZLP9</accession>
<name>HIS5_PSEU2</name>
<comment type="function">
    <text evidence="1">IGPS catalyzes the conversion of PRFAR and glutamine to IGP, AICAR and glutamate. The HisH subunit catalyzes the hydrolysis of glutamine to glutamate and ammonia as part of the synthesis of IGP and AICAR. The resulting ammonia molecule is channeled to the active site of HisF.</text>
</comment>
<comment type="catalytic activity">
    <reaction evidence="1">
        <text>5-[(5-phospho-1-deoxy-D-ribulos-1-ylimino)methylamino]-1-(5-phospho-beta-D-ribosyl)imidazole-4-carboxamide + L-glutamine = D-erythro-1-(imidazol-4-yl)glycerol 3-phosphate + 5-amino-1-(5-phospho-beta-D-ribosyl)imidazole-4-carboxamide + L-glutamate + H(+)</text>
        <dbReference type="Rhea" id="RHEA:24793"/>
        <dbReference type="ChEBI" id="CHEBI:15378"/>
        <dbReference type="ChEBI" id="CHEBI:29985"/>
        <dbReference type="ChEBI" id="CHEBI:58278"/>
        <dbReference type="ChEBI" id="CHEBI:58359"/>
        <dbReference type="ChEBI" id="CHEBI:58475"/>
        <dbReference type="ChEBI" id="CHEBI:58525"/>
        <dbReference type="EC" id="4.3.2.10"/>
    </reaction>
</comment>
<comment type="catalytic activity">
    <reaction evidence="1">
        <text>L-glutamine + H2O = L-glutamate + NH4(+)</text>
        <dbReference type="Rhea" id="RHEA:15889"/>
        <dbReference type="ChEBI" id="CHEBI:15377"/>
        <dbReference type="ChEBI" id="CHEBI:28938"/>
        <dbReference type="ChEBI" id="CHEBI:29985"/>
        <dbReference type="ChEBI" id="CHEBI:58359"/>
        <dbReference type="EC" id="3.5.1.2"/>
    </reaction>
</comment>
<comment type="pathway">
    <text evidence="1">Amino-acid biosynthesis; L-histidine biosynthesis; L-histidine from 5-phospho-alpha-D-ribose 1-diphosphate: step 5/9.</text>
</comment>
<comment type="subunit">
    <text evidence="1">Heterodimer of HisH and HisF.</text>
</comment>
<comment type="subcellular location">
    <subcellularLocation>
        <location evidence="1">Cytoplasm</location>
    </subcellularLocation>
</comment>
<evidence type="ECO:0000255" key="1">
    <source>
        <dbReference type="HAMAP-Rule" id="MF_00278"/>
    </source>
</evidence>
<protein>
    <recommendedName>
        <fullName evidence="1">Imidazole glycerol phosphate synthase subunit HisH</fullName>
        <ecNumber evidence="1">4.3.2.10</ecNumber>
    </recommendedName>
    <alternativeName>
        <fullName evidence="1">IGP synthase glutaminase subunit</fullName>
        <ecNumber evidence="1">3.5.1.2</ecNumber>
    </alternativeName>
    <alternativeName>
        <fullName evidence="1">IGP synthase subunit HisH</fullName>
    </alternativeName>
    <alternativeName>
        <fullName evidence="1">ImGP synthase subunit HisH</fullName>
        <shortName evidence="1">IGPS subunit HisH</shortName>
    </alternativeName>
</protein>
<feature type="chain" id="PRO_0000231751" description="Imidazole glycerol phosphate synthase subunit HisH">
    <location>
        <begin position="1"/>
        <end position="212"/>
    </location>
</feature>
<feature type="domain" description="Glutamine amidotransferase type-1" evidence="1">
    <location>
        <begin position="3"/>
        <end position="212"/>
    </location>
</feature>
<feature type="active site" description="Nucleophile" evidence="1">
    <location>
        <position position="81"/>
    </location>
</feature>
<feature type="active site" evidence="1">
    <location>
        <position position="190"/>
    </location>
</feature>
<feature type="active site" evidence="1">
    <location>
        <position position="192"/>
    </location>
</feature>